<accession>B8JAE9</accession>
<feature type="chain" id="PRO_1000191898" description="Aspartate carbamoyltransferase catalytic subunit">
    <location>
        <begin position="1"/>
        <end position="313"/>
    </location>
</feature>
<feature type="binding site" evidence="1">
    <location>
        <position position="58"/>
    </location>
    <ligand>
        <name>carbamoyl phosphate</name>
        <dbReference type="ChEBI" id="CHEBI:58228"/>
    </ligand>
</feature>
<feature type="binding site" evidence="1">
    <location>
        <position position="59"/>
    </location>
    <ligand>
        <name>carbamoyl phosphate</name>
        <dbReference type="ChEBI" id="CHEBI:58228"/>
    </ligand>
</feature>
<feature type="binding site" evidence="1">
    <location>
        <position position="86"/>
    </location>
    <ligand>
        <name>L-aspartate</name>
        <dbReference type="ChEBI" id="CHEBI:29991"/>
    </ligand>
</feature>
<feature type="binding site" evidence="1">
    <location>
        <position position="108"/>
    </location>
    <ligand>
        <name>carbamoyl phosphate</name>
        <dbReference type="ChEBI" id="CHEBI:58228"/>
    </ligand>
</feature>
<feature type="binding site" evidence="1">
    <location>
        <position position="136"/>
    </location>
    <ligand>
        <name>carbamoyl phosphate</name>
        <dbReference type="ChEBI" id="CHEBI:58228"/>
    </ligand>
</feature>
<feature type="binding site" evidence="1">
    <location>
        <position position="139"/>
    </location>
    <ligand>
        <name>carbamoyl phosphate</name>
        <dbReference type="ChEBI" id="CHEBI:58228"/>
    </ligand>
</feature>
<feature type="binding site" evidence="1">
    <location>
        <position position="169"/>
    </location>
    <ligand>
        <name>L-aspartate</name>
        <dbReference type="ChEBI" id="CHEBI:29991"/>
    </ligand>
</feature>
<feature type="binding site" evidence="1">
    <location>
        <position position="223"/>
    </location>
    <ligand>
        <name>L-aspartate</name>
        <dbReference type="ChEBI" id="CHEBI:29991"/>
    </ligand>
</feature>
<feature type="binding site" evidence="1">
    <location>
        <position position="265"/>
    </location>
    <ligand>
        <name>carbamoyl phosphate</name>
        <dbReference type="ChEBI" id="CHEBI:58228"/>
    </ligand>
</feature>
<feature type="binding site" evidence="1">
    <location>
        <position position="266"/>
    </location>
    <ligand>
        <name>carbamoyl phosphate</name>
        <dbReference type="ChEBI" id="CHEBI:58228"/>
    </ligand>
</feature>
<keyword id="KW-0665">Pyrimidine biosynthesis</keyword>
<keyword id="KW-0808">Transferase</keyword>
<proteinExistence type="inferred from homology"/>
<name>PYRB_ANAD2</name>
<organism>
    <name type="scientific">Anaeromyxobacter dehalogenans (strain 2CP-1 / ATCC BAA-258)</name>
    <dbReference type="NCBI Taxonomy" id="455488"/>
    <lineage>
        <taxon>Bacteria</taxon>
        <taxon>Pseudomonadati</taxon>
        <taxon>Myxococcota</taxon>
        <taxon>Myxococcia</taxon>
        <taxon>Myxococcales</taxon>
        <taxon>Cystobacterineae</taxon>
        <taxon>Anaeromyxobacteraceae</taxon>
        <taxon>Anaeromyxobacter</taxon>
    </lineage>
</organism>
<protein>
    <recommendedName>
        <fullName evidence="1">Aspartate carbamoyltransferase catalytic subunit</fullName>
        <ecNumber evidence="1">2.1.3.2</ecNumber>
    </recommendedName>
    <alternativeName>
        <fullName evidence="1">Aspartate transcarbamylase</fullName>
        <shortName evidence="1">ATCase</shortName>
    </alternativeName>
</protein>
<gene>
    <name evidence="1" type="primary">pyrB</name>
    <name type="ordered locus">A2cp1_2330</name>
</gene>
<reference key="1">
    <citation type="submission" date="2009-01" db="EMBL/GenBank/DDBJ databases">
        <title>Complete sequence of Anaeromyxobacter dehalogenans 2CP-1.</title>
        <authorList>
            <person name="Lucas S."/>
            <person name="Copeland A."/>
            <person name="Lapidus A."/>
            <person name="Glavina del Rio T."/>
            <person name="Dalin E."/>
            <person name="Tice H."/>
            <person name="Bruce D."/>
            <person name="Goodwin L."/>
            <person name="Pitluck S."/>
            <person name="Saunders E."/>
            <person name="Brettin T."/>
            <person name="Detter J.C."/>
            <person name="Han C."/>
            <person name="Larimer F."/>
            <person name="Land M."/>
            <person name="Hauser L."/>
            <person name="Kyrpides N."/>
            <person name="Ovchinnikova G."/>
            <person name="Beliaev A.S."/>
            <person name="Richardson P."/>
        </authorList>
    </citation>
    <scope>NUCLEOTIDE SEQUENCE [LARGE SCALE GENOMIC DNA]</scope>
    <source>
        <strain>2CP-1 / ATCC BAA-258</strain>
    </source>
</reference>
<evidence type="ECO:0000255" key="1">
    <source>
        <dbReference type="HAMAP-Rule" id="MF_00001"/>
    </source>
</evidence>
<dbReference type="EC" id="2.1.3.2" evidence="1"/>
<dbReference type="EMBL" id="CP001359">
    <property type="protein sequence ID" value="ACL65668.1"/>
    <property type="molecule type" value="Genomic_DNA"/>
</dbReference>
<dbReference type="RefSeq" id="WP_012633497.1">
    <property type="nucleotide sequence ID" value="NC_011891.1"/>
</dbReference>
<dbReference type="SMR" id="B8JAE9"/>
<dbReference type="KEGG" id="acp:A2cp1_2330"/>
<dbReference type="HOGENOM" id="CLU_043846_2_0_7"/>
<dbReference type="UniPathway" id="UPA00070">
    <property type="reaction ID" value="UER00116"/>
</dbReference>
<dbReference type="Proteomes" id="UP000007089">
    <property type="component" value="Chromosome"/>
</dbReference>
<dbReference type="GO" id="GO:0005829">
    <property type="term" value="C:cytosol"/>
    <property type="evidence" value="ECO:0007669"/>
    <property type="project" value="TreeGrafter"/>
</dbReference>
<dbReference type="GO" id="GO:0016597">
    <property type="term" value="F:amino acid binding"/>
    <property type="evidence" value="ECO:0007669"/>
    <property type="project" value="InterPro"/>
</dbReference>
<dbReference type="GO" id="GO:0004070">
    <property type="term" value="F:aspartate carbamoyltransferase activity"/>
    <property type="evidence" value="ECO:0007669"/>
    <property type="project" value="UniProtKB-UniRule"/>
</dbReference>
<dbReference type="GO" id="GO:0006207">
    <property type="term" value="P:'de novo' pyrimidine nucleobase biosynthetic process"/>
    <property type="evidence" value="ECO:0007669"/>
    <property type="project" value="InterPro"/>
</dbReference>
<dbReference type="GO" id="GO:0044205">
    <property type="term" value="P:'de novo' UMP biosynthetic process"/>
    <property type="evidence" value="ECO:0007669"/>
    <property type="project" value="UniProtKB-UniRule"/>
</dbReference>
<dbReference type="GO" id="GO:0006520">
    <property type="term" value="P:amino acid metabolic process"/>
    <property type="evidence" value="ECO:0007669"/>
    <property type="project" value="InterPro"/>
</dbReference>
<dbReference type="Gene3D" id="3.40.50.1370">
    <property type="entry name" value="Aspartate/ornithine carbamoyltransferase"/>
    <property type="match status" value="2"/>
</dbReference>
<dbReference type="HAMAP" id="MF_00001">
    <property type="entry name" value="Asp_carb_tr"/>
    <property type="match status" value="1"/>
</dbReference>
<dbReference type="InterPro" id="IPR006132">
    <property type="entry name" value="Asp/Orn_carbamoyltranf_P-bd"/>
</dbReference>
<dbReference type="InterPro" id="IPR006130">
    <property type="entry name" value="Asp/Orn_carbamoylTrfase"/>
</dbReference>
<dbReference type="InterPro" id="IPR036901">
    <property type="entry name" value="Asp/Orn_carbamoylTrfase_sf"/>
</dbReference>
<dbReference type="InterPro" id="IPR002082">
    <property type="entry name" value="Asp_carbamoyltransf"/>
</dbReference>
<dbReference type="InterPro" id="IPR006131">
    <property type="entry name" value="Asp_carbamoyltransf_Asp/Orn-bd"/>
</dbReference>
<dbReference type="NCBIfam" id="TIGR00670">
    <property type="entry name" value="asp_carb_tr"/>
    <property type="match status" value="1"/>
</dbReference>
<dbReference type="NCBIfam" id="NF002032">
    <property type="entry name" value="PRK00856.1"/>
    <property type="match status" value="1"/>
</dbReference>
<dbReference type="PANTHER" id="PTHR45753:SF6">
    <property type="entry name" value="ASPARTATE CARBAMOYLTRANSFERASE"/>
    <property type="match status" value="1"/>
</dbReference>
<dbReference type="PANTHER" id="PTHR45753">
    <property type="entry name" value="ORNITHINE CARBAMOYLTRANSFERASE, MITOCHONDRIAL"/>
    <property type="match status" value="1"/>
</dbReference>
<dbReference type="Pfam" id="PF00185">
    <property type="entry name" value="OTCace"/>
    <property type="match status" value="1"/>
</dbReference>
<dbReference type="Pfam" id="PF02729">
    <property type="entry name" value="OTCace_N"/>
    <property type="match status" value="1"/>
</dbReference>
<dbReference type="PRINTS" id="PR00100">
    <property type="entry name" value="AOTCASE"/>
</dbReference>
<dbReference type="PRINTS" id="PR00101">
    <property type="entry name" value="ATCASE"/>
</dbReference>
<dbReference type="SUPFAM" id="SSF53671">
    <property type="entry name" value="Aspartate/ornithine carbamoyltransferase"/>
    <property type="match status" value="1"/>
</dbReference>
<dbReference type="PROSITE" id="PS00097">
    <property type="entry name" value="CARBAMOYLTRANSFERASE"/>
    <property type="match status" value="1"/>
</dbReference>
<sequence length="313" mass="33560">MIGRHKHCIALEDFSREEILEVIDLAASMKEVLQRPIKKVPSLRGKMVVNLFFEASTRTRSSFETAAKILSADALNWTSSSSSVTKGETLVDTAKNLEAMRPDVLVIRHSAGGAPRLVAEHVGCSVVSAGDGAHEHPSQGLLDCFTLREKLGTLEGKTVAIVGDVSHSRVARSDLHAFPKLGAKVRLCGPPTMMPAGVERLGATVHTDLREAVDGADAVIMLRIQHERIGDPLIPGTREYSKVWGLNAKKAADWLKPSCVILHPGPINRGVELSPEVADGPRSVILDQVQNGVAVRMAILYLLAGGAGEEARA</sequence>
<comment type="function">
    <text evidence="1">Catalyzes the condensation of carbamoyl phosphate and aspartate to form carbamoyl aspartate and inorganic phosphate, the committed step in the de novo pyrimidine nucleotide biosynthesis pathway.</text>
</comment>
<comment type="catalytic activity">
    <reaction evidence="1">
        <text>carbamoyl phosphate + L-aspartate = N-carbamoyl-L-aspartate + phosphate + H(+)</text>
        <dbReference type="Rhea" id="RHEA:20013"/>
        <dbReference type="ChEBI" id="CHEBI:15378"/>
        <dbReference type="ChEBI" id="CHEBI:29991"/>
        <dbReference type="ChEBI" id="CHEBI:32814"/>
        <dbReference type="ChEBI" id="CHEBI:43474"/>
        <dbReference type="ChEBI" id="CHEBI:58228"/>
        <dbReference type="EC" id="2.1.3.2"/>
    </reaction>
</comment>
<comment type="pathway">
    <text evidence="1">Pyrimidine metabolism; UMP biosynthesis via de novo pathway; (S)-dihydroorotate from bicarbonate: step 2/3.</text>
</comment>
<comment type="subunit">
    <text evidence="1">Heterododecamer (2C3:3R2) of six catalytic PyrB chains organized as two trimers (C3), and six regulatory PyrI chains organized as three dimers (R2).</text>
</comment>
<comment type="similarity">
    <text evidence="1">Belongs to the aspartate/ornithine carbamoyltransferase superfamily. ATCase family.</text>
</comment>